<keyword id="KW-0002">3D-structure</keyword>
<keyword id="KW-0210">Decarboxylase</keyword>
<keyword id="KW-0456">Lyase</keyword>
<keyword id="KW-0665">Pyrimidine biosynthesis</keyword>
<keyword id="KW-1185">Reference proteome</keyword>
<evidence type="ECO:0000255" key="1">
    <source>
        <dbReference type="HAMAP-Rule" id="MF_01200"/>
    </source>
</evidence>
<evidence type="ECO:0007829" key="2">
    <source>
        <dbReference type="PDB" id="3LDV"/>
    </source>
</evidence>
<gene>
    <name evidence="1" type="primary">pyrF</name>
    <name type="ordered locus">VC_1911</name>
</gene>
<proteinExistence type="evidence at protein level"/>
<organism>
    <name type="scientific">Vibrio cholerae serotype O1 (strain ATCC 39315 / El Tor Inaba N16961)</name>
    <dbReference type="NCBI Taxonomy" id="243277"/>
    <lineage>
        <taxon>Bacteria</taxon>
        <taxon>Pseudomonadati</taxon>
        <taxon>Pseudomonadota</taxon>
        <taxon>Gammaproteobacteria</taxon>
        <taxon>Vibrionales</taxon>
        <taxon>Vibrionaceae</taxon>
        <taxon>Vibrio</taxon>
    </lineage>
</organism>
<accession>Q9KQT7</accession>
<comment type="function">
    <text evidence="1">Catalyzes the decarboxylation of orotidine 5'-monophosphate (OMP) to uridine 5'-monophosphate (UMP).</text>
</comment>
<comment type="catalytic activity">
    <reaction evidence="1">
        <text>orotidine 5'-phosphate + H(+) = UMP + CO2</text>
        <dbReference type="Rhea" id="RHEA:11596"/>
        <dbReference type="ChEBI" id="CHEBI:15378"/>
        <dbReference type="ChEBI" id="CHEBI:16526"/>
        <dbReference type="ChEBI" id="CHEBI:57538"/>
        <dbReference type="ChEBI" id="CHEBI:57865"/>
        <dbReference type="EC" id="4.1.1.23"/>
    </reaction>
</comment>
<comment type="pathway">
    <text evidence="1">Pyrimidine metabolism; UMP biosynthesis via de novo pathway; UMP from orotate: step 2/2.</text>
</comment>
<comment type="subunit">
    <text evidence="1">Homodimer.</text>
</comment>
<comment type="similarity">
    <text evidence="1">Belongs to the OMP decarboxylase family. Type 1 subfamily.</text>
</comment>
<name>PYRF_VIBCH</name>
<feature type="chain" id="PRO_0000134596" description="Orotidine 5'-phosphate decarboxylase">
    <location>
        <begin position="1"/>
        <end position="231"/>
    </location>
</feature>
<feature type="active site" description="Proton donor" evidence="1">
    <location>
        <position position="62"/>
    </location>
</feature>
<feature type="binding site" evidence="1">
    <location>
        <position position="11"/>
    </location>
    <ligand>
        <name>substrate</name>
    </ligand>
</feature>
<feature type="binding site" evidence="1">
    <location>
        <position position="33"/>
    </location>
    <ligand>
        <name>substrate</name>
    </ligand>
</feature>
<feature type="binding site" evidence="1">
    <location>
        <begin position="60"/>
        <end position="69"/>
    </location>
    <ligand>
        <name>substrate</name>
    </ligand>
</feature>
<feature type="binding site" evidence="1">
    <location>
        <position position="120"/>
    </location>
    <ligand>
        <name>substrate</name>
    </ligand>
</feature>
<feature type="binding site" evidence="1">
    <location>
        <position position="181"/>
    </location>
    <ligand>
        <name>substrate</name>
    </ligand>
</feature>
<feature type="binding site" evidence="1">
    <location>
        <position position="190"/>
    </location>
    <ligand>
        <name>substrate</name>
    </ligand>
</feature>
<feature type="binding site" evidence="1">
    <location>
        <position position="210"/>
    </location>
    <ligand>
        <name>substrate</name>
    </ligand>
</feature>
<feature type="binding site" evidence="1">
    <location>
        <position position="211"/>
    </location>
    <ligand>
        <name>substrate</name>
    </ligand>
</feature>
<feature type="strand" evidence="2">
    <location>
        <begin position="6"/>
        <end position="10"/>
    </location>
</feature>
<feature type="helix" evidence="2">
    <location>
        <begin position="15"/>
        <end position="22"/>
    </location>
</feature>
<feature type="helix" evidence="2">
    <location>
        <begin position="27"/>
        <end position="29"/>
    </location>
</feature>
<feature type="strand" evidence="2">
    <location>
        <begin position="31"/>
        <end position="35"/>
    </location>
</feature>
<feature type="helix" evidence="2">
    <location>
        <begin position="36"/>
        <end position="52"/>
    </location>
</feature>
<feature type="strand" evidence="2">
    <location>
        <begin position="57"/>
        <end position="63"/>
    </location>
</feature>
<feature type="helix" evidence="2">
    <location>
        <begin position="67"/>
        <end position="79"/>
    </location>
</feature>
<feature type="strand" evidence="2">
    <location>
        <begin position="83"/>
        <end position="88"/>
    </location>
</feature>
<feature type="helix" evidence="2">
    <location>
        <begin position="89"/>
        <end position="91"/>
    </location>
</feature>
<feature type="helix" evidence="2">
    <location>
        <begin position="93"/>
        <end position="103"/>
    </location>
</feature>
<feature type="helix" evidence="2">
    <location>
        <begin position="104"/>
        <end position="109"/>
    </location>
</feature>
<feature type="strand" evidence="2">
    <location>
        <begin position="112"/>
        <end position="116"/>
    </location>
</feature>
<feature type="helix" evidence="2">
    <location>
        <begin position="124"/>
        <end position="129"/>
    </location>
</feature>
<feature type="helix" evidence="2">
    <location>
        <begin position="136"/>
        <end position="149"/>
    </location>
</feature>
<feature type="strand" evidence="2">
    <location>
        <begin position="153"/>
        <end position="156"/>
    </location>
</feature>
<feature type="helix" evidence="2">
    <location>
        <begin position="159"/>
        <end position="169"/>
    </location>
</feature>
<feature type="strand" evidence="2">
    <location>
        <begin position="173"/>
        <end position="178"/>
    </location>
</feature>
<feature type="strand" evidence="2">
    <location>
        <begin position="191"/>
        <end position="193"/>
    </location>
</feature>
<feature type="helix" evidence="2">
    <location>
        <begin position="196"/>
        <end position="201"/>
    </location>
</feature>
<feature type="strand" evidence="2">
    <location>
        <begin position="205"/>
        <end position="209"/>
    </location>
</feature>
<feature type="helix" evidence="2">
    <location>
        <begin position="211"/>
        <end position="214"/>
    </location>
</feature>
<feature type="helix" evidence="2">
    <location>
        <begin position="219"/>
        <end position="229"/>
    </location>
</feature>
<reference key="1">
    <citation type="journal article" date="2000" name="Nature">
        <title>DNA sequence of both chromosomes of the cholera pathogen Vibrio cholerae.</title>
        <authorList>
            <person name="Heidelberg J.F."/>
            <person name="Eisen J.A."/>
            <person name="Nelson W.C."/>
            <person name="Clayton R.A."/>
            <person name="Gwinn M.L."/>
            <person name="Dodson R.J."/>
            <person name="Haft D.H."/>
            <person name="Hickey E.K."/>
            <person name="Peterson J.D."/>
            <person name="Umayam L.A."/>
            <person name="Gill S.R."/>
            <person name="Nelson K.E."/>
            <person name="Read T.D."/>
            <person name="Tettelin H."/>
            <person name="Richardson D.L."/>
            <person name="Ermolaeva M.D."/>
            <person name="Vamathevan J.J."/>
            <person name="Bass S."/>
            <person name="Qin H."/>
            <person name="Dragoi I."/>
            <person name="Sellers P."/>
            <person name="McDonald L.A."/>
            <person name="Utterback T.R."/>
            <person name="Fleischmann R.D."/>
            <person name="Nierman W.C."/>
            <person name="White O."/>
            <person name="Salzberg S.L."/>
            <person name="Smith H.O."/>
            <person name="Colwell R.R."/>
            <person name="Mekalanos J.J."/>
            <person name="Venter J.C."/>
            <person name="Fraser C.M."/>
        </authorList>
    </citation>
    <scope>NUCLEOTIDE SEQUENCE [LARGE SCALE GENOMIC DNA]</scope>
    <source>
        <strain>ATCC 39315 / El Tor Inaba N16961</strain>
    </source>
</reference>
<dbReference type="EC" id="4.1.1.23" evidence="1"/>
<dbReference type="EMBL" id="AE003852">
    <property type="protein sequence ID" value="AAF95059.1"/>
    <property type="molecule type" value="Genomic_DNA"/>
</dbReference>
<dbReference type="PIR" id="A82143">
    <property type="entry name" value="A82143"/>
</dbReference>
<dbReference type="RefSeq" id="NP_231545.1">
    <property type="nucleotide sequence ID" value="NC_002505.1"/>
</dbReference>
<dbReference type="RefSeq" id="WP_000999562.1">
    <property type="nucleotide sequence ID" value="NZ_LT906614.1"/>
</dbReference>
<dbReference type="PDB" id="3LDV">
    <property type="method" value="X-ray"/>
    <property type="resolution" value="1.77 A"/>
    <property type="chains" value="A/B=1-231"/>
</dbReference>
<dbReference type="PDB" id="3UWQ">
    <property type="method" value="X-ray"/>
    <property type="resolution" value="1.80 A"/>
    <property type="chains" value="A/B=1-231"/>
</dbReference>
<dbReference type="PDBsum" id="3LDV"/>
<dbReference type="PDBsum" id="3UWQ"/>
<dbReference type="SMR" id="Q9KQT7"/>
<dbReference type="STRING" id="243277.VC_1911"/>
<dbReference type="DNASU" id="2613540"/>
<dbReference type="EnsemblBacteria" id="AAF95059">
    <property type="protein sequence ID" value="AAF95059"/>
    <property type="gene ID" value="VC_1911"/>
</dbReference>
<dbReference type="KEGG" id="vch:VC_1911"/>
<dbReference type="PATRIC" id="fig|243277.26.peg.1828"/>
<dbReference type="eggNOG" id="COG0284">
    <property type="taxonomic scope" value="Bacteria"/>
</dbReference>
<dbReference type="HOGENOM" id="CLU_067069_0_0_6"/>
<dbReference type="UniPathway" id="UPA00070">
    <property type="reaction ID" value="UER00120"/>
</dbReference>
<dbReference type="EvolutionaryTrace" id="Q9KQT7"/>
<dbReference type="Proteomes" id="UP000000584">
    <property type="component" value="Chromosome 1"/>
</dbReference>
<dbReference type="GO" id="GO:0005829">
    <property type="term" value="C:cytosol"/>
    <property type="evidence" value="ECO:0000318"/>
    <property type="project" value="GO_Central"/>
</dbReference>
<dbReference type="GO" id="GO:0004590">
    <property type="term" value="F:orotidine-5'-phosphate decarboxylase activity"/>
    <property type="evidence" value="ECO:0000318"/>
    <property type="project" value="GO_Central"/>
</dbReference>
<dbReference type="GO" id="GO:0006207">
    <property type="term" value="P:'de novo' pyrimidine nucleobase biosynthetic process"/>
    <property type="evidence" value="ECO:0000318"/>
    <property type="project" value="GO_Central"/>
</dbReference>
<dbReference type="GO" id="GO:0044205">
    <property type="term" value="P:'de novo' UMP biosynthetic process"/>
    <property type="evidence" value="ECO:0007669"/>
    <property type="project" value="UniProtKB-UniRule"/>
</dbReference>
<dbReference type="CDD" id="cd04725">
    <property type="entry name" value="OMP_decarboxylase_like"/>
    <property type="match status" value="1"/>
</dbReference>
<dbReference type="FunFam" id="3.20.20.70:FF:000015">
    <property type="entry name" value="Orotidine 5'-phosphate decarboxylase"/>
    <property type="match status" value="1"/>
</dbReference>
<dbReference type="Gene3D" id="3.20.20.70">
    <property type="entry name" value="Aldolase class I"/>
    <property type="match status" value="1"/>
</dbReference>
<dbReference type="HAMAP" id="MF_01200_B">
    <property type="entry name" value="OMPdecase_type1_B"/>
    <property type="match status" value="1"/>
</dbReference>
<dbReference type="InterPro" id="IPR013785">
    <property type="entry name" value="Aldolase_TIM"/>
</dbReference>
<dbReference type="InterPro" id="IPR014732">
    <property type="entry name" value="OMPdecase"/>
</dbReference>
<dbReference type="InterPro" id="IPR018089">
    <property type="entry name" value="OMPdecase_AS"/>
</dbReference>
<dbReference type="InterPro" id="IPR047596">
    <property type="entry name" value="OMPdecase_bac"/>
</dbReference>
<dbReference type="InterPro" id="IPR001754">
    <property type="entry name" value="OMPdeCOase_dom"/>
</dbReference>
<dbReference type="InterPro" id="IPR011060">
    <property type="entry name" value="RibuloseP-bd_barrel"/>
</dbReference>
<dbReference type="NCBIfam" id="NF001273">
    <property type="entry name" value="PRK00230.1"/>
    <property type="match status" value="1"/>
</dbReference>
<dbReference type="NCBIfam" id="TIGR01740">
    <property type="entry name" value="pyrF"/>
    <property type="match status" value="1"/>
</dbReference>
<dbReference type="PANTHER" id="PTHR32119">
    <property type="entry name" value="OROTIDINE 5'-PHOSPHATE DECARBOXYLASE"/>
    <property type="match status" value="1"/>
</dbReference>
<dbReference type="PANTHER" id="PTHR32119:SF2">
    <property type="entry name" value="OROTIDINE 5'-PHOSPHATE DECARBOXYLASE"/>
    <property type="match status" value="1"/>
</dbReference>
<dbReference type="Pfam" id="PF00215">
    <property type="entry name" value="OMPdecase"/>
    <property type="match status" value="1"/>
</dbReference>
<dbReference type="SMART" id="SM00934">
    <property type="entry name" value="OMPdecase"/>
    <property type="match status" value="1"/>
</dbReference>
<dbReference type="SUPFAM" id="SSF51366">
    <property type="entry name" value="Ribulose-phoshate binding barrel"/>
    <property type="match status" value="1"/>
</dbReference>
<dbReference type="PROSITE" id="PS00156">
    <property type="entry name" value="OMPDECASE"/>
    <property type="match status" value="1"/>
</dbReference>
<sequence>MNDPKVIVALDYDNLADALAFVDKIDPSTCRLKVGKEMFTLFGPDFVRELHKRGFSVFLDLKFHDIPNTCSKAVKAAAELGVWMVNVHASGGERMMAASREILEPYGKERPLLIGVTVLTSMESADLQGIGILSAPQDHVLRLATLTKNAGLDGVVCSAQEASLLKQHLGREFKLVTPGIRPAGSEQGDQRRIMTPAQAIASGSDYLVIGRPITQAAHPEVVLEEINSSLV</sequence>
<protein>
    <recommendedName>
        <fullName evidence="1">Orotidine 5'-phosphate decarboxylase</fullName>
        <ecNumber evidence="1">4.1.1.23</ecNumber>
    </recommendedName>
    <alternativeName>
        <fullName evidence="1">OMP decarboxylase</fullName>
        <shortName evidence="1">OMPDCase</shortName>
        <shortName evidence="1">OMPdecase</shortName>
    </alternativeName>
</protein>